<feature type="chain" id="PRO_0000139514" description="Nitrogenase iron protein">
    <location>
        <begin position="1"/>
        <end position="297"/>
    </location>
</feature>
<feature type="binding site" evidence="2">
    <location>
        <begin position="13"/>
        <end position="20"/>
    </location>
    <ligand>
        <name>ATP</name>
        <dbReference type="ChEBI" id="CHEBI:30616"/>
    </ligand>
</feature>
<feature type="binding site" evidence="1">
    <location>
        <position position="101"/>
    </location>
    <ligand>
        <name>[4Fe-4S] cluster</name>
        <dbReference type="ChEBI" id="CHEBI:49883"/>
        <note>ligand shared between dimeric partners</note>
    </ligand>
</feature>
<feature type="binding site" evidence="1">
    <location>
        <position position="135"/>
    </location>
    <ligand>
        <name>[4Fe-4S] cluster</name>
        <dbReference type="ChEBI" id="CHEBI:49883"/>
        <note>ligand shared between dimeric partners</note>
    </ligand>
</feature>
<feature type="modified residue" description="ADP-ribosylarginine; by dinitrogenase reductase ADP-ribosyltransferase" evidence="1">
    <location>
        <position position="104"/>
    </location>
</feature>
<feature type="sequence conflict" description="In Ref. 2." evidence="3" ref="2">
    <original>I</original>
    <variation>D</variation>
    <location>
        <position position="211"/>
    </location>
</feature>
<feature type="sequence conflict" description="In Ref. 2." evidence="3" ref="2">
    <original>N</original>
    <variation>M</variation>
    <location>
        <position position="231"/>
    </location>
</feature>
<feature type="sequence conflict" description="In Ref. 2." evidence="3" ref="2">
    <original>N</original>
    <variation>M</variation>
    <location>
        <position position="241"/>
    </location>
</feature>
<feature type="sequence conflict" description="In Ref. 2." evidence="3" ref="2">
    <original>N</original>
    <variation>W</variation>
    <location>
        <position position="282"/>
    </location>
</feature>
<proteinExistence type="inferred from homology"/>
<sequence length="297" mass="32540">MTEENIRQIAFYGKGGIGKSTTSQNTLAAMAEMGQRILIVGCDPKADSTRLMLHSKAQTTVLHLAAERGAVEDIEIEEVMLTGFRNVRCVESGGPEPGVGCAGRGIITAINFLEENGAYQDLDFVSYDVLGDVVCGGFAMPIREGKAQEIYIVTSGEMMAMYAANNIARGVLKYAHTGGVRLGGLICNSRNTDREIELIETLAKRLNTQMIHYVPRDNIVQHAELRRMTVNEYAPESNQANEYRILAQKIIDNKNLAIPTPIEMEELEELLIEFGILESDENTAMLVGKTATEAPVV</sequence>
<comment type="function">
    <text evidence="1">The key enzymatic reactions in nitrogen fixation are catalyzed by the nitrogenase complex, which has 2 components: the iron protein and the molybdenum-iron protein.</text>
</comment>
<comment type="catalytic activity">
    <reaction>
        <text>N2 + 8 reduced [2Fe-2S]-[ferredoxin] + 16 ATP + 16 H2O = H2 + 8 oxidized [2Fe-2S]-[ferredoxin] + 2 NH4(+) + 16 ADP + 16 phosphate + 6 H(+)</text>
        <dbReference type="Rhea" id="RHEA:21448"/>
        <dbReference type="Rhea" id="RHEA-COMP:10000"/>
        <dbReference type="Rhea" id="RHEA-COMP:10001"/>
        <dbReference type="ChEBI" id="CHEBI:15377"/>
        <dbReference type="ChEBI" id="CHEBI:15378"/>
        <dbReference type="ChEBI" id="CHEBI:17997"/>
        <dbReference type="ChEBI" id="CHEBI:18276"/>
        <dbReference type="ChEBI" id="CHEBI:28938"/>
        <dbReference type="ChEBI" id="CHEBI:30616"/>
        <dbReference type="ChEBI" id="CHEBI:33737"/>
        <dbReference type="ChEBI" id="CHEBI:33738"/>
        <dbReference type="ChEBI" id="CHEBI:43474"/>
        <dbReference type="ChEBI" id="CHEBI:456216"/>
        <dbReference type="EC" id="1.18.6.1"/>
    </reaction>
</comment>
<comment type="cofactor">
    <cofactor evidence="1">
        <name>[4Fe-4S] cluster</name>
        <dbReference type="ChEBI" id="CHEBI:49883"/>
    </cofactor>
    <text evidence="1">Binds 1 [4Fe-4S] cluster per dimer.</text>
</comment>
<comment type="subunit">
    <text evidence="1">Homodimer.</text>
</comment>
<comment type="PTM">
    <text evidence="1">The reversible ADP-ribosylation of Arg-104 inactivates the nitrogenase reductase and regulates nitrogenase activity.</text>
</comment>
<comment type="similarity">
    <text evidence="3">Belongs to the NifH/BchL/ChlL family.</text>
</comment>
<reference key="1">
    <citation type="journal article" date="1994" name="Gene">
        <title>Analysis of the sequences within and flanking the cyanoglobin-encoding gene, glbN, of the cyanobacterium Nostoc commune UTEX 584.</title>
        <authorList>
            <person name="Angeloni S.V."/>
            <person name="Potts M."/>
        </authorList>
    </citation>
    <scope>NUCLEOTIDE SEQUENCE [GENOMIC DNA]</scope>
    <source>
        <strain>UTEX 584 / SAG 1453-5</strain>
    </source>
</reference>
<reference key="2">
    <citation type="journal article" date="1988" name="J. Bacteriol.">
        <title>Cloning of nifHD from Nostoc commune UTEX 584 and of a flanking region homologous to part of the Azotobacter vinelandii nifU gene.</title>
        <authorList>
            <person name="Defrancesco N."/>
            <person name="Potts M."/>
        </authorList>
    </citation>
    <scope>NUCLEOTIDE SEQUENCE [GENOMIC DNA] OF 210-295</scope>
    <source>
        <strain>UTEX 584 / SAG 1453-5</strain>
    </source>
</reference>
<dbReference type="EC" id="1.18.6.1"/>
<dbReference type="EMBL" id="L23514">
    <property type="protein sequence ID" value="AAA21838.1"/>
    <property type="molecule type" value="Genomic_DNA"/>
</dbReference>
<dbReference type="PIR" id="A28186">
    <property type="entry name" value="A28186"/>
</dbReference>
<dbReference type="SMR" id="P26250"/>
<dbReference type="GO" id="GO:0051539">
    <property type="term" value="F:4 iron, 4 sulfur cluster binding"/>
    <property type="evidence" value="ECO:0007669"/>
    <property type="project" value="UniProtKB-KW"/>
</dbReference>
<dbReference type="GO" id="GO:0005524">
    <property type="term" value="F:ATP binding"/>
    <property type="evidence" value="ECO:0007669"/>
    <property type="project" value="UniProtKB-UniRule"/>
</dbReference>
<dbReference type="GO" id="GO:0046872">
    <property type="term" value="F:metal ion binding"/>
    <property type="evidence" value="ECO:0007669"/>
    <property type="project" value="UniProtKB-KW"/>
</dbReference>
<dbReference type="GO" id="GO:0016163">
    <property type="term" value="F:nitrogenase activity"/>
    <property type="evidence" value="ECO:0007669"/>
    <property type="project" value="UniProtKB-UniRule"/>
</dbReference>
<dbReference type="GO" id="GO:0009399">
    <property type="term" value="P:nitrogen fixation"/>
    <property type="evidence" value="ECO:0007669"/>
    <property type="project" value="UniProtKB-UniRule"/>
</dbReference>
<dbReference type="CDD" id="cd02040">
    <property type="entry name" value="NifH"/>
    <property type="match status" value="1"/>
</dbReference>
<dbReference type="FunFam" id="3.40.50.300:FF:001379">
    <property type="entry name" value="Nitrogenase iron protein 1"/>
    <property type="match status" value="1"/>
</dbReference>
<dbReference type="Gene3D" id="3.40.50.300">
    <property type="entry name" value="P-loop containing nucleotide triphosphate hydrolases"/>
    <property type="match status" value="1"/>
</dbReference>
<dbReference type="HAMAP" id="MF_00533">
    <property type="entry name" value="NifH"/>
    <property type="match status" value="1"/>
</dbReference>
<dbReference type="InterPro" id="IPR030655">
    <property type="entry name" value="NifH/chlL_CS"/>
</dbReference>
<dbReference type="InterPro" id="IPR000392">
    <property type="entry name" value="NifH/frxC"/>
</dbReference>
<dbReference type="InterPro" id="IPR005977">
    <property type="entry name" value="Nitrogenase_Fe_NifH"/>
</dbReference>
<dbReference type="InterPro" id="IPR027417">
    <property type="entry name" value="P-loop_NTPase"/>
</dbReference>
<dbReference type="NCBIfam" id="TIGR01287">
    <property type="entry name" value="nifH"/>
    <property type="match status" value="1"/>
</dbReference>
<dbReference type="PANTHER" id="PTHR42864">
    <property type="entry name" value="LIGHT-INDEPENDENT PROTOCHLOROPHYLLIDE REDUCTASE IRON-SULFUR ATP-BINDING PROTEIN"/>
    <property type="match status" value="1"/>
</dbReference>
<dbReference type="PANTHER" id="PTHR42864:SF2">
    <property type="entry name" value="LIGHT-INDEPENDENT PROTOCHLOROPHYLLIDE REDUCTASE IRON-SULFUR ATP-BINDING PROTEIN"/>
    <property type="match status" value="1"/>
</dbReference>
<dbReference type="Pfam" id="PF00142">
    <property type="entry name" value="Fer4_NifH"/>
    <property type="match status" value="1"/>
</dbReference>
<dbReference type="PIRSF" id="PIRSF000363">
    <property type="entry name" value="Nitrogenase_iron"/>
    <property type="match status" value="1"/>
</dbReference>
<dbReference type="PRINTS" id="PR00091">
    <property type="entry name" value="NITROGNASEII"/>
</dbReference>
<dbReference type="SUPFAM" id="SSF52540">
    <property type="entry name" value="P-loop containing nucleoside triphosphate hydrolases"/>
    <property type="match status" value="1"/>
</dbReference>
<dbReference type="PROSITE" id="PS00746">
    <property type="entry name" value="NIFH_FRXC_1"/>
    <property type="match status" value="1"/>
</dbReference>
<dbReference type="PROSITE" id="PS00692">
    <property type="entry name" value="NIFH_FRXC_2"/>
    <property type="match status" value="1"/>
</dbReference>
<dbReference type="PROSITE" id="PS51026">
    <property type="entry name" value="NIFH_FRXC_3"/>
    <property type="match status" value="1"/>
</dbReference>
<gene>
    <name type="primary">nifH</name>
</gene>
<keyword id="KW-0004">4Fe-4S</keyword>
<keyword id="KW-0013">ADP-ribosylation</keyword>
<keyword id="KW-0067">ATP-binding</keyword>
<keyword id="KW-0408">Iron</keyword>
<keyword id="KW-0411">Iron-sulfur</keyword>
<keyword id="KW-0479">Metal-binding</keyword>
<keyword id="KW-0535">Nitrogen fixation</keyword>
<keyword id="KW-0547">Nucleotide-binding</keyword>
<keyword id="KW-0560">Oxidoreductase</keyword>
<protein>
    <recommendedName>
        <fullName>Nitrogenase iron protein</fullName>
        <ecNumber>1.18.6.1</ecNumber>
    </recommendedName>
    <alternativeName>
        <fullName>Nitrogenase Fe protein</fullName>
    </alternativeName>
    <alternativeName>
        <fullName>Nitrogenase component II</fullName>
    </alternativeName>
    <alternativeName>
        <fullName>Nitrogenase reductase</fullName>
    </alternativeName>
</protein>
<name>NIFH_NOSCO</name>
<organism>
    <name type="scientific">Nostoc commune</name>
    <dbReference type="NCBI Taxonomy" id="1178"/>
    <lineage>
        <taxon>Bacteria</taxon>
        <taxon>Bacillati</taxon>
        <taxon>Cyanobacteriota</taxon>
        <taxon>Cyanophyceae</taxon>
        <taxon>Nostocales</taxon>
        <taxon>Nostocaceae</taxon>
        <taxon>Nostoc</taxon>
    </lineage>
</organism>
<evidence type="ECO:0000250" key="1"/>
<evidence type="ECO:0000255" key="2"/>
<evidence type="ECO:0000305" key="3"/>
<accession>P26250</accession>